<evidence type="ECO:0000250" key="1"/>
<evidence type="ECO:0000250" key="2">
    <source>
        <dbReference type="UniProtKB" id="P08879"/>
    </source>
</evidence>
<evidence type="ECO:0000255" key="3"/>
<evidence type="ECO:0000305" key="4"/>
<evidence type="ECO:0000312" key="5">
    <source>
        <dbReference type="EMBL" id="AAX63738.1"/>
    </source>
</evidence>
<feature type="chain" id="PRO_0000257977" description="Nucleoside diphosphate kinase 1">
    <location>
        <begin position="1"/>
        <end position="148"/>
    </location>
</feature>
<feature type="active site" description="Pros-phosphohistidine intermediate" evidence="2">
    <location>
        <position position="115"/>
    </location>
</feature>
<feature type="binding site" evidence="2">
    <location>
        <position position="9"/>
    </location>
    <ligand>
        <name>ATP</name>
        <dbReference type="ChEBI" id="CHEBI:30616"/>
    </ligand>
</feature>
<feature type="binding site" evidence="2">
    <location>
        <position position="57"/>
    </location>
    <ligand>
        <name>ATP</name>
        <dbReference type="ChEBI" id="CHEBI:30616"/>
    </ligand>
</feature>
<feature type="binding site" evidence="2">
    <location>
        <position position="85"/>
    </location>
    <ligand>
        <name>ATP</name>
        <dbReference type="ChEBI" id="CHEBI:30616"/>
    </ligand>
</feature>
<feature type="binding site" evidence="2">
    <location>
        <position position="91"/>
    </location>
    <ligand>
        <name>ATP</name>
        <dbReference type="ChEBI" id="CHEBI:30616"/>
    </ligand>
</feature>
<feature type="binding site" evidence="2">
    <location>
        <position position="102"/>
    </location>
    <ligand>
        <name>ATP</name>
        <dbReference type="ChEBI" id="CHEBI:30616"/>
    </ligand>
</feature>
<feature type="binding site" evidence="2">
    <location>
        <position position="112"/>
    </location>
    <ligand>
        <name>ATP</name>
        <dbReference type="ChEBI" id="CHEBI:30616"/>
    </ligand>
</feature>
<keyword id="KW-0067">ATP-binding</keyword>
<keyword id="KW-0418">Kinase</keyword>
<keyword id="KW-0460">Magnesium</keyword>
<keyword id="KW-0479">Metal-binding</keyword>
<keyword id="KW-0546">Nucleotide metabolism</keyword>
<keyword id="KW-0547">Nucleotide-binding</keyword>
<keyword id="KW-0597">Phosphoprotein</keyword>
<keyword id="KW-1185">Reference proteome</keyword>
<keyword id="KW-0808">Transferase</keyword>
<name>NDK1_TOBAC</name>
<proteinExistence type="evidence at transcript level"/>
<protein>
    <recommendedName>
        <fullName>Nucleoside diphosphate kinase 1</fullName>
        <ecNumber>2.7.4.6</ecNumber>
    </recommendedName>
    <alternativeName>
        <fullName>Nucleoside diphosphate kinase I</fullName>
        <shortName>NDK I</shortName>
        <shortName>NDP kinase I</shortName>
        <shortName>NDPK I</shortName>
    </alternativeName>
</protein>
<reference evidence="5" key="1">
    <citation type="submission" date="2005-03" db="EMBL/GenBank/DDBJ databases">
        <title>Nicotiana tabacum nucleoside diphosphate kinase.</title>
        <authorList>
            <person name="Zhou Q."/>
            <person name="Zhang J."/>
            <person name="Chen S."/>
        </authorList>
    </citation>
    <scope>NUCLEOTIDE SEQUENCE [MRNA]</scope>
</reference>
<organism>
    <name type="scientific">Nicotiana tabacum</name>
    <name type="common">Common tobacco</name>
    <dbReference type="NCBI Taxonomy" id="4097"/>
    <lineage>
        <taxon>Eukaryota</taxon>
        <taxon>Viridiplantae</taxon>
        <taxon>Streptophyta</taxon>
        <taxon>Embryophyta</taxon>
        <taxon>Tracheophyta</taxon>
        <taxon>Spermatophyta</taxon>
        <taxon>Magnoliopsida</taxon>
        <taxon>eudicotyledons</taxon>
        <taxon>Gunneridae</taxon>
        <taxon>Pentapetalae</taxon>
        <taxon>asterids</taxon>
        <taxon>lamiids</taxon>
        <taxon>Solanales</taxon>
        <taxon>Solanaceae</taxon>
        <taxon>Nicotianoideae</taxon>
        <taxon>Nicotianeae</taxon>
        <taxon>Nicotiana</taxon>
    </lineage>
</organism>
<dbReference type="EC" id="2.7.4.6"/>
<dbReference type="EMBL" id="AY962601">
    <property type="protein sequence ID" value="AAX63738.1"/>
    <property type="molecule type" value="mRNA"/>
</dbReference>
<dbReference type="RefSeq" id="NP_001412804.1">
    <property type="nucleotide sequence ID" value="NM_001425875.1"/>
</dbReference>
<dbReference type="RefSeq" id="XP_016467992.1">
    <property type="nucleotide sequence ID" value="XM_016612506.1"/>
</dbReference>
<dbReference type="SMR" id="Q56E62"/>
<dbReference type="STRING" id="4097.Q56E62"/>
<dbReference type="PaxDb" id="4097-Q56E62"/>
<dbReference type="GeneID" id="107790563"/>
<dbReference type="KEGG" id="nta:107790563"/>
<dbReference type="OMA" id="ACAGVHE"/>
<dbReference type="OrthoDB" id="1212515at2759"/>
<dbReference type="PhylomeDB" id="Q56E62"/>
<dbReference type="Proteomes" id="UP000084051">
    <property type="component" value="Unplaced"/>
</dbReference>
<dbReference type="GO" id="GO:0005524">
    <property type="term" value="F:ATP binding"/>
    <property type="evidence" value="ECO:0007669"/>
    <property type="project" value="UniProtKB-KW"/>
</dbReference>
<dbReference type="GO" id="GO:0046872">
    <property type="term" value="F:metal ion binding"/>
    <property type="evidence" value="ECO:0007669"/>
    <property type="project" value="UniProtKB-KW"/>
</dbReference>
<dbReference type="GO" id="GO:0004550">
    <property type="term" value="F:nucleoside diphosphate kinase activity"/>
    <property type="evidence" value="ECO:0007669"/>
    <property type="project" value="UniProtKB-EC"/>
</dbReference>
<dbReference type="GO" id="GO:0006241">
    <property type="term" value="P:CTP biosynthetic process"/>
    <property type="evidence" value="ECO:0007669"/>
    <property type="project" value="InterPro"/>
</dbReference>
<dbReference type="GO" id="GO:0006183">
    <property type="term" value="P:GTP biosynthetic process"/>
    <property type="evidence" value="ECO:0007669"/>
    <property type="project" value="InterPro"/>
</dbReference>
<dbReference type="GO" id="GO:0006228">
    <property type="term" value="P:UTP biosynthetic process"/>
    <property type="evidence" value="ECO:0007669"/>
    <property type="project" value="InterPro"/>
</dbReference>
<dbReference type="CDD" id="cd04413">
    <property type="entry name" value="NDPk_I"/>
    <property type="match status" value="1"/>
</dbReference>
<dbReference type="FunFam" id="3.30.70.141:FF:000002">
    <property type="entry name" value="Nucleoside diphosphate kinase"/>
    <property type="match status" value="1"/>
</dbReference>
<dbReference type="Gene3D" id="3.30.70.141">
    <property type="entry name" value="Nucleoside diphosphate kinase-like domain"/>
    <property type="match status" value="1"/>
</dbReference>
<dbReference type="HAMAP" id="MF_00451">
    <property type="entry name" value="NDP_kinase"/>
    <property type="match status" value="1"/>
</dbReference>
<dbReference type="InterPro" id="IPR034907">
    <property type="entry name" value="NDK-like_dom"/>
</dbReference>
<dbReference type="InterPro" id="IPR036850">
    <property type="entry name" value="NDK-like_dom_sf"/>
</dbReference>
<dbReference type="InterPro" id="IPR001564">
    <property type="entry name" value="Nucleoside_diP_kinase"/>
</dbReference>
<dbReference type="InterPro" id="IPR023005">
    <property type="entry name" value="Nucleoside_diP_kinase_AS"/>
</dbReference>
<dbReference type="NCBIfam" id="NF001908">
    <property type="entry name" value="PRK00668.1"/>
    <property type="match status" value="1"/>
</dbReference>
<dbReference type="PANTHER" id="PTHR11349">
    <property type="entry name" value="NUCLEOSIDE DIPHOSPHATE KINASE"/>
    <property type="match status" value="1"/>
</dbReference>
<dbReference type="Pfam" id="PF00334">
    <property type="entry name" value="NDK"/>
    <property type="match status" value="1"/>
</dbReference>
<dbReference type="PRINTS" id="PR01243">
    <property type="entry name" value="NUCDPKINASE"/>
</dbReference>
<dbReference type="SMART" id="SM00562">
    <property type="entry name" value="NDK"/>
    <property type="match status" value="1"/>
</dbReference>
<dbReference type="SUPFAM" id="SSF54919">
    <property type="entry name" value="Nucleoside diphosphate kinase, NDK"/>
    <property type="match status" value="1"/>
</dbReference>
<dbReference type="PROSITE" id="PS00469">
    <property type="entry name" value="NDPK"/>
    <property type="match status" value="1"/>
</dbReference>
<dbReference type="PROSITE" id="PS51374">
    <property type="entry name" value="NDPK_LIKE"/>
    <property type="match status" value="1"/>
</dbReference>
<accession>Q56E62</accession>
<sequence length="148" mass="16296">MEQTFIMIKPDGVQRGLVGEIIGRFEKKGFSLKGLKLITVDRAFAEKHYSDLSAKPFFNGLVDYIISGPVVAMVWEGKGVVTTGRKIIGATNPLESAPGTIRGDYAIDIGRNVIHGSDAVESARKEIALWFPEGVAEWQSSLHSWIYE</sequence>
<comment type="function">
    <text evidence="1">Major role in the synthesis of nucleoside triphosphates other than ATP. The ATP gamma phosphate is transferred to the NDP beta phosphate via a ping-pong mechanism, using a phosphorylated active-site intermediate (By similarity).</text>
</comment>
<comment type="catalytic activity">
    <reaction evidence="4">
        <text>a 2'-deoxyribonucleoside 5'-diphosphate + ATP = a 2'-deoxyribonucleoside 5'-triphosphate + ADP</text>
        <dbReference type="Rhea" id="RHEA:44640"/>
        <dbReference type="ChEBI" id="CHEBI:30616"/>
        <dbReference type="ChEBI" id="CHEBI:61560"/>
        <dbReference type="ChEBI" id="CHEBI:73316"/>
        <dbReference type="ChEBI" id="CHEBI:456216"/>
        <dbReference type="EC" id="2.7.4.6"/>
    </reaction>
</comment>
<comment type="catalytic activity">
    <reaction evidence="4">
        <text>a ribonucleoside 5'-diphosphate + ATP = a ribonucleoside 5'-triphosphate + ADP</text>
        <dbReference type="Rhea" id="RHEA:18113"/>
        <dbReference type="ChEBI" id="CHEBI:30616"/>
        <dbReference type="ChEBI" id="CHEBI:57930"/>
        <dbReference type="ChEBI" id="CHEBI:61557"/>
        <dbReference type="ChEBI" id="CHEBI:456216"/>
        <dbReference type="EC" id="2.7.4.6"/>
    </reaction>
</comment>
<comment type="cofactor">
    <cofactor evidence="2">
        <name>Mg(2+)</name>
        <dbReference type="ChEBI" id="CHEBI:18420"/>
    </cofactor>
</comment>
<comment type="similarity">
    <text evidence="3">Belongs to the NDK family.</text>
</comment>